<protein>
    <recommendedName>
        <fullName evidence="1">Exodeoxyribonuclease 7 large subunit</fullName>
        <ecNumber evidence="1">3.1.11.6</ecNumber>
    </recommendedName>
    <alternativeName>
        <fullName evidence="1">Exodeoxyribonuclease VII large subunit</fullName>
        <shortName evidence="1">Exonuclease VII large subunit</shortName>
    </alternativeName>
</protein>
<evidence type="ECO:0000255" key="1">
    <source>
        <dbReference type="HAMAP-Rule" id="MF_00378"/>
    </source>
</evidence>
<gene>
    <name evidence="1" type="primary">xseA</name>
    <name type="ordered locus">BCAN_B0773</name>
</gene>
<reference key="1">
    <citation type="submission" date="2007-10" db="EMBL/GenBank/DDBJ databases">
        <title>Brucella canis ATCC 23365 whole genome shotgun sequencing project.</title>
        <authorList>
            <person name="Setubal J.C."/>
            <person name="Bowns C."/>
            <person name="Boyle S."/>
            <person name="Crasta O.R."/>
            <person name="Czar M.J."/>
            <person name="Dharmanolla C."/>
            <person name="Gillespie J.J."/>
            <person name="Kenyon R.W."/>
            <person name="Lu J."/>
            <person name="Mane S."/>
            <person name="Mohapatra S."/>
            <person name="Nagrani S."/>
            <person name="Purkayastha A."/>
            <person name="Rajasimha H.K."/>
            <person name="Shallom J.M."/>
            <person name="Shallom S."/>
            <person name="Shukla M."/>
            <person name="Snyder E.E."/>
            <person name="Sobral B.W."/>
            <person name="Wattam A.R."/>
            <person name="Will R."/>
            <person name="Williams K."/>
            <person name="Yoo H."/>
            <person name="Bruce D."/>
            <person name="Detter C."/>
            <person name="Munk C."/>
            <person name="Brettin T.S."/>
        </authorList>
    </citation>
    <scope>NUCLEOTIDE SEQUENCE [LARGE SCALE GENOMIC DNA]</scope>
    <source>
        <strain>ATCC 23365 / NCTC 10854 / RM-666</strain>
    </source>
</reference>
<dbReference type="EC" id="3.1.11.6" evidence="1"/>
<dbReference type="EMBL" id="CP000873">
    <property type="protein sequence ID" value="ABX63937.1"/>
    <property type="molecule type" value="Genomic_DNA"/>
</dbReference>
<dbReference type="SMR" id="A9MC50"/>
<dbReference type="KEGG" id="bcs:BCAN_B0773"/>
<dbReference type="HOGENOM" id="CLU_023625_3_1_5"/>
<dbReference type="PhylomeDB" id="A9MC50"/>
<dbReference type="PRO" id="PR:A9MC50"/>
<dbReference type="Proteomes" id="UP000001385">
    <property type="component" value="Chromosome II"/>
</dbReference>
<dbReference type="GO" id="GO:0005737">
    <property type="term" value="C:cytoplasm"/>
    <property type="evidence" value="ECO:0007669"/>
    <property type="project" value="UniProtKB-SubCell"/>
</dbReference>
<dbReference type="GO" id="GO:0009318">
    <property type="term" value="C:exodeoxyribonuclease VII complex"/>
    <property type="evidence" value="ECO:0007669"/>
    <property type="project" value="InterPro"/>
</dbReference>
<dbReference type="GO" id="GO:0008855">
    <property type="term" value="F:exodeoxyribonuclease VII activity"/>
    <property type="evidence" value="ECO:0007669"/>
    <property type="project" value="UniProtKB-UniRule"/>
</dbReference>
<dbReference type="GO" id="GO:0003676">
    <property type="term" value="F:nucleic acid binding"/>
    <property type="evidence" value="ECO:0007669"/>
    <property type="project" value="InterPro"/>
</dbReference>
<dbReference type="GO" id="GO:0006308">
    <property type="term" value="P:DNA catabolic process"/>
    <property type="evidence" value="ECO:0007669"/>
    <property type="project" value="UniProtKB-UniRule"/>
</dbReference>
<dbReference type="CDD" id="cd04489">
    <property type="entry name" value="ExoVII_LU_OBF"/>
    <property type="match status" value="1"/>
</dbReference>
<dbReference type="HAMAP" id="MF_00378">
    <property type="entry name" value="Exonuc_7_L"/>
    <property type="match status" value="1"/>
</dbReference>
<dbReference type="InterPro" id="IPR003753">
    <property type="entry name" value="Exonuc_VII_L"/>
</dbReference>
<dbReference type="InterPro" id="IPR020579">
    <property type="entry name" value="Exonuc_VII_lsu_C"/>
</dbReference>
<dbReference type="InterPro" id="IPR025824">
    <property type="entry name" value="OB-fold_nuc-bd_dom"/>
</dbReference>
<dbReference type="NCBIfam" id="TIGR00237">
    <property type="entry name" value="xseA"/>
    <property type="match status" value="1"/>
</dbReference>
<dbReference type="PANTHER" id="PTHR30008">
    <property type="entry name" value="EXODEOXYRIBONUCLEASE 7 LARGE SUBUNIT"/>
    <property type="match status" value="1"/>
</dbReference>
<dbReference type="PANTHER" id="PTHR30008:SF0">
    <property type="entry name" value="EXODEOXYRIBONUCLEASE 7 LARGE SUBUNIT"/>
    <property type="match status" value="1"/>
</dbReference>
<dbReference type="Pfam" id="PF02601">
    <property type="entry name" value="Exonuc_VII_L"/>
    <property type="match status" value="2"/>
</dbReference>
<dbReference type="Pfam" id="PF13742">
    <property type="entry name" value="tRNA_anti_2"/>
    <property type="match status" value="1"/>
</dbReference>
<organism>
    <name type="scientific">Brucella canis (strain ATCC 23365 / NCTC 10854 / RM-666)</name>
    <dbReference type="NCBI Taxonomy" id="483179"/>
    <lineage>
        <taxon>Bacteria</taxon>
        <taxon>Pseudomonadati</taxon>
        <taxon>Pseudomonadota</taxon>
        <taxon>Alphaproteobacteria</taxon>
        <taxon>Hyphomicrobiales</taxon>
        <taxon>Brucellaceae</taxon>
        <taxon>Brucella/Ochrobactrum group</taxon>
        <taxon>Brucella</taxon>
    </lineage>
</organism>
<sequence length="511" mass="56305">MASDSSFPGASSNVAEYSVSEISGALKRTVEDTFGHVRVRGEISGYRGPHSSGHAYFALKDDRARLEAVIWRGSMSRLRFRPEEGMEVIATGKLTTYPGSSKYQIVIEQMEPAGAGALMALLEERKQRLAAEGLFDPALKQLLPFMPRVIGVVTSPTGAVIRDIIHRISDRYPLRVIVWPVRVQGDTCGPEVATAVNGFNTLPDDGPIPRPDVLIVARGGGSLEDLWGFNDEIVVRAVAASHIPVISAVGHETDWTLIDLAADMRAPTPTGAAEMAVPVKADLQASLASQSARLSSAMSRFFDQKRQAHRAAARAMPSADQLLALPRRRFDEAASRLTRALFVNTQKKRVHFDGHARQLSPRLLQRRLVELERGVTMLGQRLPRALEAFLRERQTAFTHRANRLSPEPILRRTRLTGSTLEQLDRRRDQAVRLLIERVKRRSQELDRLMRTLSYESVLERGFAVVFDAQGKPVKQAAAVSPGDALSVRFRDGDVGVVARAGLTIPDPTKGQ</sequence>
<feature type="chain" id="PRO_1000079975" description="Exodeoxyribonuclease 7 large subunit">
    <location>
        <begin position="1"/>
        <end position="511"/>
    </location>
</feature>
<accession>A9MC50</accession>
<name>EX7L_BRUC2</name>
<proteinExistence type="inferred from homology"/>
<comment type="function">
    <text evidence="1">Bidirectionally degrades single-stranded DNA into large acid-insoluble oligonucleotides, which are then degraded further into small acid-soluble oligonucleotides.</text>
</comment>
<comment type="catalytic activity">
    <reaction evidence="1">
        <text>Exonucleolytic cleavage in either 5'- to 3'- or 3'- to 5'-direction to yield nucleoside 5'-phosphates.</text>
        <dbReference type="EC" id="3.1.11.6"/>
    </reaction>
</comment>
<comment type="subunit">
    <text evidence="1">Heterooligomer composed of large and small subunits.</text>
</comment>
<comment type="subcellular location">
    <subcellularLocation>
        <location evidence="1">Cytoplasm</location>
    </subcellularLocation>
</comment>
<comment type="similarity">
    <text evidence="1">Belongs to the XseA family.</text>
</comment>
<keyword id="KW-0963">Cytoplasm</keyword>
<keyword id="KW-0269">Exonuclease</keyword>
<keyword id="KW-0378">Hydrolase</keyword>
<keyword id="KW-0540">Nuclease</keyword>
<keyword id="KW-1185">Reference proteome</keyword>